<reference key="1">
    <citation type="journal article" date="2002" name="J. Bacteriol.">
        <title>Whole-genome comparison of Mycobacterium tuberculosis clinical and laboratory strains.</title>
        <authorList>
            <person name="Fleischmann R.D."/>
            <person name="Alland D."/>
            <person name="Eisen J.A."/>
            <person name="Carpenter L."/>
            <person name="White O."/>
            <person name="Peterson J.D."/>
            <person name="DeBoy R.T."/>
            <person name="Dodson R.J."/>
            <person name="Gwinn M.L."/>
            <person name="Haft D.H."/>
            <person name="Hickey E.K."/>
            <person name="Kolonay J.F."/>
            <person name="Nelson W.C."/>
            <person name="Umayam L.A."/>
            <person name="Ermolaeva M.D."/>
            <person name="Salzberg S.L."/>
            <person name="Delcher A."/>
            <person name="Utterback T.R."/>
            <person name="Weidman J.F."/>
            <person name="Khouri H.M."/>
            <person name="Gill J."/>
            <person name="Mikula A."/>
            <person name="Bishai W."/>
            <person name="Jacobs W.R. Jr."/>
            <person name="Venter J.C."/>
            <person name="Fraser C.M."/>
        </authorList>
    </citation>
    <scope>NUCLEOTIDE SEQUENCE [LARGE SCALE GENOMIC DNA]</scope>
    <source>
        <strain>CDC 1551 / Oshkosh</strain>
    </source>
</reference>
<proteinExistence type="inferred from homology"/>
<dbReference type="EC" id="3.6.1.-"/>
<dbReference type="EMBL" id="AE000516">
    <property type="protein sequence ID" value="AAK48392.1"/>
    <property type="molecule type" value="Genomic_DNA"/>
</dbReference>
<dbReference type="PIR" id="E70600">
    <property type="entry name" value="E70600"/>
</dbReference>
<dbReference type="RefSeq" id="WP_003400124.1">
    <property type="nucleotide sequence ID" value="NZ_KK341228.1"/>
</dbReference>
<dbReference type="RefSeq" id="WP_010924737.1">
    <property type="nucleotide sequence ID" value="NC_002755.2"/>
</dbReference>
<dbReference type="SMR" id="P9WIX6"/>
<dbReference type="KEGG" id="mtc:MT4027"/>
<dbReference type="PATRIC" id="fig|83331.31.peg.4333"/>
<dbReference type="HOGENOM" id="CLU_037162_14_3_11"/>
<dbReference type="Proteomes" id="UP000001020">
    <property type="component" value="Chromosome"/>
</dbReference>
<dbReference type="GO" id="GO:0016787">
    <property type="term" value="F:hydrolase activity"/>
    <property type="evidence" value="ECO:0007669"/>
    <property type="project" value="UniProtKB-KW"/>
</dbReference>
<dbReference type="GO" id="GO:0046872">
    <property type="term" value="F:metal ion binding"/>
    <property type="evidence" value="ECO:0007669"/>
    <property type="project" value="UniProtKB-KW"/>
</dbReference>
<dbReference type="CDD" id="cd03673">
    <property type="entry name" value="NUDIX_Ap6A_hydrolase"/>
    <property type="match status" value="1"/>
</dbReference>
<dbReference type="Gene3D" id="3.90.79.10">
    <property type="entry name" value="Nucleoside Triphosphate Pyrophosphohydrolase"/>
    <property type="match status" value="1"/>
</dbReference>
<dbReference type="InterPro" id="IPR020476">
    <property type="entry name" value="Nudix_hydrolase"/>
</dbReference>
<dbReference type="InterPro" id="IPR015797">
    <property type="entry name" value="NUDIX_hydrolase-like_dom_sf"/>
</dbReference>
<dbReference type="InterPro" id="IPR020084">
    <property type="entry name" value="NUDIX_hydrolase_CS"/>
</dbReference>
<dbReference type="InterPro" id="IPR000086">
    <property type="entry name" value="NUDIX_hydrolase_dom"/>
</dbReference>
<dbReference type="PANTHER" id="PTHR43736">
    <property type="entry name" value="ADP-RIBOSE PYROPHOSPHATASE"/>
    <property type="match status" value="1"/>
</dbReference>
<dbReference type="PANTHER" id="PTHR43736:SF1">
    <property type="entry name" value="DIHYDRONEOPTERIN TRIPHOSPHATE DIPHOSPHATASE"/>
    <property type="match status" value="1"/>
</dbReference>
<dbReference type="Pfam" id="PF00293">
    <property type="entry name" value="NUDIX"/>
    <property type="match status" value="1"/>
</dbReference>
<dbReference type="PRINTS" id="PR00502">
    <property type="entry name" value="NUDIXFAMILY"/>
</dbReference>
<dbReference type="SUPFAM" id="SSF55811">
    <property type="entry name" value="Nudix"/>
    <property type="match status" value="1"/>
</dbReference>
<dbReference type="PROSITE" id="PS51462">
    <property type="entry name" value="NUDIX"/>
    <property type="match status" value="1"/>
</dbReference>
<dbReference type="PROSITE" id="PS00893">
    <property type="entry name" value="NUDIX_BOX"/>
    <property type="match status" value="1"/>
</dbReference>
<accession>P9WIX6</accession>
<accession>L0TFL7</accession>
<accession>O05437</accession>
<accession>Q8VIR0</accession>
<sequence>MSDGEQAKSRRRRGRRRGRRAAATAENHMDAQPAGDATPTPATAKRSRSRSPRRGSTRMRTVHETSAGGLVIDGIDGPRDAQVAALIGRVDRRGRLLWSLPKGHIELGETAEQTAIREVAEETGIRGSVLAALGRIDYWFVTDGRRVHKTVHHYLMRFLGGELSDEDLEVAEVAWVPIRELPSRLAYADERRLAEVADELIDKLQSDGPAALPPLPPSSPRRRPQTHSRARHADDSAPGQHNGPGPGP</sequence>
<protein>
    <recommendedName>
        <fullName>Putative mutator protein MutT4</fullName>
        <ecNumber>3.6.1.-</ecNumber>
    </recommendedName>
</protein>
<name>MUTT4_MYCTO</name>
<gene>
    <name type="primary">mutT4</name>
    <name type="ordered locus">MT4027</name>
</gene>
<feature type="chain" id="PRO_0000427928" description="Putative mutator protein MutT4">
    <location>
        <begin position="1"/>
        <end position="248"/>
    </location>
</feature>
<feature type="domain" description="Nudix hydrolase" evidence="3">
    <location>
        <begin position="62"/>
        <end position="198"/>
    </location>
</feature>
<feature type="region of interest" description="Disordered" evidence="4">
    <location>
        <begin position="1"/>
        <end position="64"/>
    </location>
</feature>
<feature type="region of interest" description="Disordered" evidence="4">
    <location>
        <begin position="204"/>
        <end position="248"/>
    </location>
</feature>
<feature type="short sequence motif" description="Nudix box">
    <location>
        <begin position="103"/>
        <end position="124"/>
    </location>
</feature>
<feature type="compositionally biased region" description="Basic residues" evidence="4">
    <location>
        <begin position="9"/>
        <end position="20"/>
    </location>
</feature>
<feature type="compositionally biased region" description="Low complexity" evidence="4">
    <location>
        <begin position="31"/>
        <end position="44"/>
    </location>
</feature>
<feature type="compositionally biased region" description="Basic residues" evidence="4">
    <location>
        <begin position="45"/>
        <end position="57"/>
    </location>
</feature>
<feature type="compositionally biased region" description="Basic residues" evidence="4">
    <location>
        <begin position="220"/>
        <end position="230"/>
    </location>
</feature>
<feature type="binding site" evidence="1">
    <location>
        <position position="103"/>
    </location>
    <ligand>
        <name>Mg(2+)</name>
        <dbReference type="ChEBI" id="CHEBI:18420"/>
    </ligand>
</feature>
<feature type="binding site" evidence="2">
    <location>
        <position position="118"/>
    </location>
    <ligand>
        <name>Mg(2+)</name>
        <dbReference type="ChEBI" id="CHEBI:18420"/>
    </ligand>
</feature>
<feature type="binding site" evidence="1">
    <location>
        <position position="121"/>
    </location>
    <ligand>
        <name>Mg(2+)</name>
        <dbReference type="ChEBI" id="CHEBI:18420"/>
    </ligand>
</feature>
<feature type="binding site" evidence="2">
    <location>
        <position position="122"/>
    </location>
    <ligand>
        <name>Mg(2+)</name>
        <dbReference type="ChEBI" id="CHEBI:18420"/>
    </ligand>
</feature>
<comment type="function">
    <text evidence="1">May be involved in the GO system responsible for removing an oxidatively damaged form of guanine (7,8-dihydro-8-oxoguanine, 8-oxo-dGTP) from DNA and the nucleotide pool.</text>
</comment>
<comment type="cofactor">
    <cofactor evidence="1">
        <name>Mg(2+)</name>
        <dbReference type="ChEBI" id="CHEBI:18420"/>
    </cofactor>
    <cofactor evidence="1">
        <name>Mn(2+)</name>
        <dbReference type="ChEBI" id="CHEBI:29035"/>
    </cofactor>
</comment>
<comment type="similarity">
    <text evidence="5">Belongs to the Nudix hydrolase family.</text>
</comment>
<organism>
    <name type="scientific">Mycobacterium tuberculosis (strain CDC 1551 / Oshkosh)</name>
    <dbReference type="NCBI Taxonomy" id="83331"/>
    <lineage>
        <taxon>Bacteria</taxon>
        <taxon>Bacillati</taxon>
        <taxon>Actinomycetota</taxon>
        <taxon>Actinomycetes</taxon>
        <taxon>Mycobacteriales</taxon>
        <taxon>Mycobacteriaceae</taxon>
        <taxon>Mycobacterium</taxon>
        <taxon>Mycobacterium tuberculosis complex</taxon>
    </lineage>
</organism>
<evidence type="ECO:0000250" key="1"/>
<evidence type="ECO:0000255" key="2"/>
<evidence type="ECO:0000255" key="3">
    <source>
        <dbReference type="PROSITE-ProRule" id="PRU00794"/>
    </source>
</evidence>
<evidence type="ECO:0000256" key="4">
    <source>
        <dbReference type="SAM" id="MobiDB-lite"/>
    </source>
</evidence>
<evidence type="ECO:0000305" key="5"/>
<keyword id="KW-0378">Hydrolase</keyword>
<keyword id="KW-0460">Magnesium</keyword>
<keyword id="KW-0464">Manganese</keyword>
<keyword id="KW-0479">Metal-binding</keyword>
<keyword id="KW-0515">Mutator protein</keyword>
<keyword id="KW-1185">Reference proteome</keyword>